<proteinExistence type="evidence at transcript level"/>
<evidence type="ECO:0000255" key="1">
    <source>
        <dbReference type="HAMAP-Rule" id="MF_00576"/>
    </source>
</evidence>
<evidence type="ECO:0000256" key="2">
    <source>
        <dbReference type="SAM" id="MobiDB-lite"/>
    </source>
</evidence>
<evidence type="ECO:0000269" key="3">
    <source>
    </source>
</evidence>
<evidence type="ECO:0000303" key="4">
    <source>
    </source>
</evidence>
<evidence type="ECO:0000305" key="5"/>
<dbReference type="EMBL" id="AL939128">
    <property type="protein sequence ID" value="CAA22037.1"/>
    <property type="molecule type" value="Genomic_DNA"/>
</dbReference>
<dbReference type="PIR" id="T34730">
    <property type="entry name" value="T34730"/>
</dbReference>
<dbReference type="RefSeq" id="NP_630582.1">
    <property type="nucleotide sequence ID" value="NC_003888.3"/>
</dbReference>
<dbReference type="RefSeq" id="WP_011030969.1">
    <property type="nucleotide sequence ID" value="NZ_VNID01000002.1"/>
</dbReference>
<dbReference type="SMR" id="Q9ZC13"/>
<dbReference type="STRING" id="100226.gene:17764157"/>
<dbReference type="PaxDb" id="100226-SCO6500"/>
<dbReference type="KEGG" id="sco:SCO6500"/>
<dbReference type="PATRIC" id="fig|100226.15.peg.6601"/>
<dbReference type="eggNOG" id="ENOG50328MZ">
    <property type="taxonomic scope" value="Bacteria"/>
</dbReference>
<dbReference type="HOGENOM" id="CLU_117660_0_0_11"/>
<dbReference type="InParanoid" id="Q9ZC13"/>
<dbReference type="OrthoDB" id="284387at2"/>
<dbReference type="PhylomeDB" id="Q9ZC13"/>
<dbReference type="Proteomes" id="UP000001973">
    <property type="component" value="Chromosome"/>
</dbReference>
<dbReference type="GO" id="GO:0033172">
    <property type="term" value="C:gas vesicle shell"/>
    <property type="evidence" value="ECO:0007669"/>
    <property type="project" value="UniProtKB-UniRule"/>
</dbReference>
<dbReference type="GO" id="GO:0012506">
    <property type="term" value="C:vesicle membrane"/>
    <property type="evidence" value="ECO:0007669"/>
    <property type="project" value="InterPro"/>
</dbReference>
<dbReference type="GO" id="GO:0005198">
    <property type="term" value="F:structural molecule activity"/>
    <property type="evidence" value="ECO:0007669"/>
    <property type="project" value="InterPro"/>
</dbReference>
<dbReference type="HAMAP" id="MF_00576">
    <property type="entry name" value="Gas_vesicle_A"/>
    <property type="match status" value="1"/>
</dbReference>
<dbReference type="InterPro" id="IPR000638">
    <property type="entry name" value="Gas-vesicle_GvpA-like"/>
</dbReference>
<dbReference type="InterPro" id="IPR047870">
    <property type="entry name" value="Gas_vesicle_GvpA"/>
</dbReference>
<dbReference type="InterPro" id="IPR050530">
    <property type="entry name" value="GvpA"/>
</dbReference>
<dbReference type="InterPro" id="IPR018493">
    <property type="entry name" value="GvpA-like_CS"/>
</dbReference>
<dbReference type="NCBIfam" id="NF006872">
    <property type="entry name" value="PRK09368.1"/>
    <property type="match status" value="1"/>
</dbReference>
<dbReference type="PANTHER" id="PTHR35344:SF4">
    <property type="entry name" value="GAS VESICLE PROTEIN A1"/>
    <property type="match status" value="1"/>
</dbReference>
<dbReference type="PANTHER" id="PTHR35344">
    <property type="entry name" value="GAS VESICLE STRUCTURAL PROTEIN 2-RELATED"/>
    <property type="match status" value="1"/>
</dbReference>
<dbReference type="Pfam" id="PF00741">
    <property type="entry name" value="Gas_vesicle"/>
    <property type="match status" value="1"/>
</dbReference>
<dbReference type="PROSITE" id="PS00234">
    <property type="entry name" value="GAS_VESICLE_A_1"/>
    <property type="match status" value="1"/>
</dbReference>
<dbReference type="PROSITE" id="PS00669">
    <property type="entry name" value="GAS_VESICLE_A_2"/>
    <property type="match status" value="1"/>
</dbReference>
<accession>Q9ZC13</accession>
<sequence>MTVVPAQQTGGGGSSGLYDVLELVLDRGLVIDAFVRVSLVGIEILKIDVRVVVASVDTYLRFAEACNRLDLEAGPRKDPGLPDLVGEMTESGARGKSKGALSGAAETISDAFKQARDDGGSERETSSRPRARKAAPSRRKEEQE</sequence>
<protein>
    <recommendedName>
        <fullName evidence="1">Gas vesicle protein A1</fullName>
        <shortName evidence="1">GvpA1</shortName>
    </recommendedName>
</protein>
<feature type="chain" id="PRO_0000199990" description="Gas vesicle protein A1">
    <location>
        <begin position="1"/>
        <end position="144"/>
    </location>
</feature>
<feature type="region of interest" description="Disordered" evidence="2">
    <location>
        <begin position="72"/>
        <end position="144"/>
    </location>
</feature>
<feature type="compositionally biased region" description="Basic and acidic residues" evidence="2">
    <location>
        <begin position="113"/>
        <end position="127"/>
    </location>
</feature>
<comment type="function">
    <text evidence="1 5">Gas vesicles are hollow, gas filled proteinaceous nanostructures found in some microorganisms. During planktonic growth they allow positioning of the organism at a favorable depth for light or nutrient acquisition. GvpA forms the protein shell (By similarity). It is not clear what function GVs perform in soil bacteria (Probable).</text>
</comment>
<comment type="subunit">
    <text evidence="1">The gas vesicle shell is 2 nm thick and consists of a single layer of this protein. It forms helical ribs nearly perpendicular to the long axis of the vesicle.</text>
</comment>
<comment type="subcellular location">
    <subcellularLocation>
        <location evidence="1">Gas vesicle shell</location>
    </subcellularLocation>
</comment>
<comment type="induction">
    <text evidence="3">Constitutively transcribed at low levels, repressed by argR.</text>
</comment>
<comment type="similarity">
    <text evidence="1">Belongs to the gas vesicle GvpA family.</text>
</comment>
<gene>
    <name evidence="1" type="primary">gvpA1</name>
    <name evidence="4" type="synonym">gvpA</name>
    <name type="ordered locus">SCO6500</name>
    <name type="ORF">SC1E6.09</name>
</gene>
<reference key="1">
    <citation type="journal article" date="2002" name="Nature">
        <title>Complete genome sequence of the model actinomycete Streptomyces coelicolor A3(2).</title>
        <authorList>
            <person name="Bentley S.D."/>
            <person name="Chater K.F."/>
            <person name="Cerdeno-Tarraga A.-M."/>
            <person name="Challis G.L."/>
            <person name="Thomson N.R."/>
            <person name="James K.D."/>
            <person name="Harris D.E."/>
            <person name="Quail M.A."/>
            <person name="Kieser H."/>
            <person name="Harper D."/>
            <person name="Bateman A."/>
            <person name="Brown S."/>
            <person name="Chandra G."/>
            <person name="Chen C.W."/>
            <person name="Collins M."/>
            <person name="Cronin A."/>
            <person name="Fraser A."/>
            <person name="Goble A."/>
            <person name="Hidalgo J."/>
            <person name="Hornsby T."/>
            <person name="Howarth S."/>
            <person name="Huang C.-H."/>
            <person name="Kieser T."/>
            <person name="Larke L."/>
            <person name="Murphy L.D."/>
            <person name="Oliver K."/>
            <person name="O'Neil S."/>
            <person name="Rabbinowitsch E."/>
            <person name="Rajandream M.A."/>
            <person name="Rutherford K.M."/>
            <person name="Rutter S."/>
            <person name="Seeger K."/>
            <person name="Saunders D."/>
            <person name="Sharp S."/>
            <person name="Squares R."/>
            <person name="Squares S."/>
            <person name="Taylor K."/>
            <person name="Warren T."/>
            <person name="Wietzorrek A."/>
            <person name="Woodward J.R."/>
            <person name="Barrell B.G."/>
            <person name="Parkhill J."/>
            <person name="Hopwood D.A."/>
        </authorList>
    </citation>
    <scope>NUCLEOTIDE SEQUENCE [LARGE SCALE GENOMIC DNA]</scope>
    <source>
        <strain>ATCC BAA-471 / A3(2) / M145</strain>
    </source>
</reference>
<reference key="2">
    <citation type="journal article" date="2018" name="Front. Microbiol.">
        <title>ArgR of Streptomyces coelicolor Is a Pleiotropic Transcriptional Regulator: Effect on the Transcriptome, Antibiotic Production, and Differentiation in Liquid Cultures.</title>
        <authorList>
            <person name="Botas A."/>
            <person name="Perez-Redondo R."/>
            <person name="Rodriguez-Garcia A."/>
            <person name="Alvarez-Alvarez R."/>
            <person name="Yaguee P."/>
            <person name="Manteca A."/>
            <person name="Liras P."/>
        </authorList>
    </citation>
    <scope>INDUCTION</scope>
    <source>
        <strain>ATCC BAA-471 / A3(2) / M145</strain>
    </source>
</reference>
<keyword id="KW-0304">Gas vesicle</keyword>
<keyword id="KW-1185">Reference proteome</keyword>
<name>GVPA1_STRCO</name>
<organism>
    <name type="scientific">Streptomyces coelicolor (strain ATCC BAA-471 / A3(2) / M145)</name>
    <dbReference type="NCBI Taxonomy" id="100226"/>
    <lineage>
        <taxon>Bacteria</taxon>
        <taxon>Bacillati</taxon>
        <taxon>Actinomycetota</taxon>
        <taxon>Actinomycetes</taxon>
        <taxon>Kitasatosporales</taxon>
        <taxon>Streptomycetaceae</taxon>
        <taxon>Streptomyces</taxon>
        <taxon>Streptomyces albidoflavus group</taxon>
    </lineage>
</organism>